<comment type="function">
    <text evidence="1">Functions in the biosynthesis of branched-chain amino acids. Catalyzes the dehydration of (2R,3R)-2,3-dihydroxy-3-methylpentanoate (2,3-dihydroxy-3-methylvalerate) into 2-oxo-3-methylpentanoate (2-oxo-3-methylvalerate) and of (2R)-2,3-dihydroxy-3-methylbutanoate (2,3-dihydroxyisovalerate) into 2-oxo-3-methylbutanoate (2-oxoisovalerate), the penultimate precursor to L-isoleucine and L-valine, respectively.</text>
</comment>
<comment type="catalytic activity">
    <reaction evidence="1">
        <text>(2R)-2,3-dihydroxy-3-methylbutanoate = 3-methyl-2-oxobutanoate + H2O</text>
        <dbReference type="Rhea" id="RHEA:24809"/>
        <dbReference type="ChEBI" id="CHEBI:11851"/>
        <dbReference type="ChEBI" id="CHEBI:15377"/>
        <dbReference type="ChEBI" id="CHEBI:49072"/>
        <dbReference type="EC" id="4.2.1.9"/>
    </reaction>
    <physiologicalReaction direction="left-to-right" evidence="1">
        <dbReference type="Rhea" id="RHEA:24810"/>
    </physiologicalReaction>
</comment>
<comment type="catalytic activity">
    <reaction evidence="1">
        <text>(2R,3R)-2,3-dihydroxy-3-methylpentanoate = (S)-3-methyl-2-oxopentanoate + H2O</text>
        <dbReference type="Rhea" id="RHEA:27694"/>
        <dbReference type="ChEBI" id="CHEBI:15377"/>
        <dbReference type="ChEBI" id="CHEBI:35146"/>
        <dbReference type="ChEBI" id="CHEBI:49258"/>
        <dbReference type="EC" id="4.2.1.9"/>
    </reaction>
    <physiologicalReaction direction="left-to-right" evidence="1">
        <dbReference type="Rhea" id="RHEA:27695"/>
    </physiologicalReaction>
</comment>
<comment type="cofactor">
    <cofactor evidence="1">
        <name>[2Fe-2S] cluster</name>
        <dbReference type="ChEBI" id="CHEBI:190135"/>
    </cofactor>
    <text evidence="1">Binds 1 [2Fe-2S] cluster per subunit. This cluster acts as a Lewis acid cofactor.</text>
</comment>
<comment type="cofactor">
    <cofactor evidence="1">
        <name>Mg(2+)</name>
        <dbReference type="ChEBI" id="CHEBI:18420"/>
    </cofactor>
</comment>
<comment type="pathway">
    <text evidence="1">Amino-acid biosynthesis; L-isoleucine biosynthesis; L-isoleucine from 2-oxobutanoate: step 3/4.</text>
</comment>
<comment type="pathway">
    <text evidence="1">Amino-acid biosynthesis; L-valine biosynthesis; L-valine from pyruvate: step 3/4.</text>
</comment>
<comment type="subunit">
    <text evidence="1">Homodimer.</text>
</comment>
<comment type="similarity">
    <text evidence="1">Belongs to the IlvD/Edd family.</text>
</comment>
<organism>
    <name type="scientific">Pelagibacter ubique (strain HTCC1062)</name>
    <dbReference type="NCBI Taxonomy" id="335992"/>
    <lineage>
        <taxon>Bacteria</taxon>
        <taxon>Pseudomonadati</taxon>
        <taxon>Pseudomonadota</taxon>
        <taxon>Alphaproteobacteria</taxon>
        <taxon>Candidatus Pelagibacterales</taxon>
        <taxon>Candidatus Pelagibacteraceae</taxon>
        <taxon>Candidatus Pelagibacter</taxon>
    </lineage>
</organism>
<keyword id="KW-0001">2Fe-2S</keyword>
<keyword id="KW-0028">Amino-acid biosynthesis</keyword>
<keyword id="KW-0100">Branched-chain amino acid biosynthesis</keyword>
<keyword id="KW-0408">Iron</keyword>
<keyword id="KW-0411">Iron-sulfur</keyword>
<keyword id="KW-0456">Lyase</keyword>
<keyword id="KW-0460">Magnesium</keyword>
<keyword id="KW-0479">Metal-binding</keyword>
<keyword id="KW-1185">Reference proteome</keyword>
<accession>Q4FM19</accession>
<gene>
    <name evidence="1" type="primary">ilvD</name>
    <name type="ordered locus">SAR11_0961</name>
</gene>
<evidence type="ECO:0000255" key="1">
    <source>
        <dbReference type="HAMAP-Rule" id="MF_00012"/>
    </source>
</evidence>
<sequence length="572" mass="60909">MAKFNKKKLPSRHTSLGADRAPHRSFYYAMGETEKDVAKPFVGVVSTWNEAAPCNIALMRQAQSVKKGVRASGGTPREFCTITVTDGIAMGHEGMKSSLISREVIADSTELTVRGHCYDALVGIAGCDKSLPALMMAMVRLNVPSVFIYGGSILPGQYKGKDVTVVDVFEAVGKHSAGKMSAKELRKLELVACPSAGACGGQFTANTMACVSEAIGLALPYSAGTPAPYEERDKYALLSGKTVMNLLQKNIRPRDIVTKKSLENAATIVAATGGSTNAALHLPAIANEIGIKFDLMDVAKIFKKTPYLADLKPGGKYVAKDMWLAGGVPMLLKTLFDGGFIHGDCMTVTGKTMKQNLKNIKFNPKQKVLRAYDNPLSPDGGVVGLKGNLAPDGGIVKIAGLKKLQFTGKARCFDNEEAAMACVQKKKYKAGDVIIIRYEGPVGGPGMREMLSTTGAIYGQGMGEKVALITDGRFSGATRGFCVGHVGPEAALGGPLALLRNGDVIDIDAKKGTINVRLTKSQLATRHKKWKAKKSSFGSGTIWKYAQTVGPAYLGAPTHPGKRKEVKVYADI</sequence>
<dbReference type="EC" id="4.2.1.9" evidence="1"/>
<dbReference type="EMBL" id="CP000084">
    <property type="protein sequence ID" value="AAZ21769.1"/>
    <property type="molecule type" value="Genomic_DNA"/>
</dbReference>
<dbReference type="RefSeq" id="WP_011282068.1">
    <property type="nucleotide sequence ID" value="NC_007205.1"/>
</dbReference>
<dbReference type="SMR" id="Q4FM19"/>
<dbReference type="STRING" id="335992.SAR11_0961"/>
<dbReference type="GeneID" id="66295451"/>
<dbReference type="KEGG" id="pub:SAR11_0961"/>
<dbReference type="eggNOG" id="COG0129">
    <property type="taxonomic scope" value="Bacteria"/>
</dbReference>
<dbReference type="HOGENOM" id="CLU_014271_4_2_5"/>
<dbReference type="OrthoDB" id="9807077at2"/>
<dbReference type="UniPathway" id="UPA00047">
    <property type="reaction ID" value="UER00057"/>
</dbReference>
<dbReference type="UniPathway" id="UPA00049">
    <property type="reaction ID" value="UER00061"/>
</dbReference>
<dbReference type="Proteomes" id="UP000002528">
    <property type="component" value="Chromosome"/>
</dbReference>
<dbReference type="GO" id="GO:0051537">
    <property type="term" value="F:2 iron, 2 sulfur cluster binding"/>
    <property type="evidence" value="ECO:0007669"/>
    <property type="project" value="UniProtKB-UniRule"/>
</dbReference>
<dbReference type="GO" id="GO:0004160">
    <property type="term" value="F:dihydroxy-acid dehydratase activity"/>
    <property type="evidence" value="ECO:0007669"/>
    <property type="project" value="UniProtKB-UniRule"/>
</dbReference>
<dbReference type="GO" id="GO:0000287">
    <property type="term" value="F:magnesium ion binding"/>
    <property type="evidence" value="ECO:0007669"/>
    <property type="project" value="UniProtKB-UniRule"/>
</dbReference>
<dbReference type="GO" id="GO:0009097">
    <property type="term" value="P:isoleucine biosynthetic process"/>
    <property type="evidence" value="ECO:0007669"/>
    <property type="project" value="UniProtKB-UniRule"/>
</dbReference>
<dbReference type="GO" id="GO:0009099">
    <property type="term" value="P:L-valine biosynthetic process"/>
    <property type="evidence" value="ECO:0007669"/>
    <property type="project" value="UniProtKB-UniRule"/>
</dbReference>
<dbReference type="FunFam" id="3.50.30.80:FF:000001">
    <property type="entry name" value="Dihydroxy-acid dehydratase"/>
    <property type="match status" value="1"/>
</dbReference>
<dbReference type="Gene3D" id="3.50.30.80">
    <property type="entry name" value="IlvD/EDD C-terminal domain-like"/>
    <property type="match status" value="1"/>
</dbReference>
<dbReference type="HAMAP" id="MF_00012">
    <property type="entry name" value="IlvD"/>
    <property type="match status" value="1"/>
</dbReference>
<dbReference type="InterPro" id="IPR050165">
    <property type="entry name" value="DHAD_IlvD/Edd"/>
</dbReference>
<dbReference type="InterPro" id="IPR042096">
    <property type="entry name" value="Dihydro-acid_dehy_C"/>
</dbReference>
<dbReference type="InterPro" id="IPR004404">
    <property type="entry name" value="DihydroxyA_deHydtase"/>
</dbReference>
<dbReference type="InterPro" id="IPR020558">
    <property type="entry name" value="DiOHA_6PGluconate_deHydtase_CS"/>
</dbReference>
<dbReference type="InterPro" id="IPR056740">
    <property type="entry name" value="ILV_EDD_C"/>
</dbReference>
<dbReference type="InterPro" id="IPR000581">
    <property type="entry name" value="ILV_EDD_N"/>
</dbReference>
<dbReference type="InterPro" id="IPR037237">
    <property type="entry name" value="IlvD/EDD_N"/>
</dbReference>
<dbReference type="NCBIfam" id="TIGR00110">
    <property type="entry name" value="ilvD"/>
    <property type="match status" value="1"/>
</dbReference>
<dbReference type="NCBIfam" id="NF002068">
    <property type="entry name" value="PRK00911.1"/>
    <property type="match status" value="1"/>
</dbReference>
<dbReference type="PANTHER" id="PTHR21000">
    <property type="entry name" value="DIHYDROXY-ACID DEHYDRATASE DAD"/>
    <property type="match status" value="1"/>
</dbReference>
<dbReference type="PANTHER" id="PTHR21000:SF5">
    <property type="entry name" value="DIHYDROXY-ACID DEHYDRATASE, MITOCHONDRIAL"/>
    <property type="match status" value="1"/>
</dbReference>
<dbReference type="Pfam" id="PF24877">
    <property type="entry name" value="ILV_EDD_C"/>
    <property type="match status" value="1"/>
</dbReference>
<dbReference type="Pfam" id="PF00920">
    <property type="entry name" value="ILVD_EDD_N"/>
    <property type="match status" value="1"/>
</dbReference>
<dbReference type="SUPFAM" id="SSF143975">
    <property type="entry name" value="IlvD/EDD N-terminal domain-like"/>
    <property type="match status" value="1"/>
</dbReference>
<dbReference type="SUPFAM" id="SSF52016">
    <property type="entry name" value="LeuD/IlvD-like"/>
    <property type="match status" value="1"/>
</dbReference>
<dbReference type="PROSITE" id="PS00886">
    <property type="entry name" value="ILVD_EDD_1"/>
    <property type="match status" value="1"/>
</dbReference>
<dbReference type="PROSITE" id="PS00887">
    <property type="entry name" value="ILVD_EDD_2"/>
    <property type="match status" value="1"/>
</dbReference>
<protein>
    <recommendedName>
        <fullName evidence="1">Dihydroxy-acid dehydratase</fullName>
        <shortName evidence="1">DAD</shortName>
        <ecNumber evidence="1">4.2.1.9</ecNumber>
    </recommendedName>
</protein>
<name>ILVD_PELUB</name>
<reference key="1">
    <citation type="journal article" date="2005" name="Science">
        <title>Genome streamlining in a cosmopolitan oceanic bacterium.</title>
        <authorList>
            <person name="Giovannoni S.J."/>
            <person name="Tripp H.J."/>
            <person name="Givan S."/>
            <person name="Podar M."/>
            <person name="Vergin K.L."/>
            <person name="Baptista D."/>
            <person name="Bibbs L."/>
            <person name="Eads J."/>
            <person name="Richardson T.H."/>
            <person name="Noordewier M."/>
            <person name="Rappe M.S."/>
            <person name="Short J.M."/>
            <person name="Carrington J.C."/>
            <person name="Mathur E.J."/>
        </authorList>
    </citation>
    <scope>NUCLEOTIDE SEQUENCE [LARGE SCALE GENOMIC DNA]</scope>
    <source>
        <strain>HTCC1062</strain>
    </source>
</reference>
<feature type="chain" id="PRO_0000225404" description="Dihydroxy-acid dehydratase">
    <location>
        <begin position="1"/>
        <end position="572"/>
    </location>
</feature>
<feature type="active site" description="Proton acceptor" evidence="1">
    <location>
        <position position="475"/>
    </location>
</feature>
<feature type="binding site" evidence="1">
    <location>
        <position position="54"/>
    </location>
    <ligand>
        <name>[2Fe-2S] cluster</name>
        <dbReference type="ChEBI" id="CHEBI:190135"/>
    </ligand>
</feature>
<feature type="binding site" evidence="1">
    <location>
        <position position="86"/>
    </location>
    <ligand>
        <name>Mg(2+)</name>
        <dbReference type="ChEBI" id="CHEBI:18420"/>
    </ligand>
</feature>
<feature type="binding site" evidence="1">
    <location>
        <position position="127"/>
    </location>
    <ligand>
        <name>[2Fe-2S] cluster</name>
        <dbReference type="ChEBI" id="CHEBI:190135"/>
    </ligand>
</feature>
<feature type="binding site" evidence="1">
    <location>
        <position position="128"/>
    </location>
    <ligand>
        <name>Mg(2+)</name>
        <dbReference type="ChEBI" id="CHEBI:18420"/>
    </ligand>
</feature>
<feature type="binding site" description="via carbamate group" evidence="1">
    <location>
        <position position="129"/>
    </location>
    <ligand>
        <name>Mg(2+)</name>
        <dbReference type="ChEBI" id="CHEBI:18420"/>
    </ligand>
</feature>
<feature type="binding site" evidence="1">
    <location>
        <position position="199"/>
    </location>
    <ligand>
        <name>[2Fe-2S] cluster</name>
        <dbReference type="ChEBI" id="CHEBI:190135"/>
    </ligand>
</feature>
<feature type="binding site" evidence="1">
    <location>
        <position position="449"/>
    </location>
    <ligand>
        <name>Mg(2+)</name>
        <dbReference type="ChEBI" id="CHEBI:18420"/>
    </ligand>
</feature>
<feature type="modified residue" description="N6-carboxylysine" evidence="1">
    <location>
        <position position="129"/>
    </location>
</feature>
<proteinExistence type="inferred from homology"/>